<reference key="1">
    <citation type="submission" date="2006-02" db="EMBL/GenBank/DDBJ databases">
        <title>Complete sequence of chromosome of Jannaschia sp. CCS1.</title>
        <authorList>
            <consortium name="US DOE Joint Genome Institute"/>
            <person name="Copeland A."/>
            <person name="Lucas S."/>
            <person name="Lapidus A."/>
            <person name="Barry K."/>
            <person name="Detter J.C."/>
            <person name="Glavina del Rio T."/>
            <person name="Hammon N."/>
            <person name="Israni S."/>
            <person name="Pitluck S."/>
            <person name="Brettin T."/>
            <person name="Bruce D."/>
            <person name="Han C."/>
            <person name="Tapia R."/>
            <person name="Gilna P."/>
            <person name="Chertkov O."/>
            <person name="Saunders E."/>
            <person name="Schmutz J."/>
            <person name="Larimer F."/>
            <person name="Land M."/>
            <person name="Kyrpides N."/>
            <person name="Lykidis A."/>
            <person name="Moran M.A."/>
            <person name="Belas R."/>
            <person name="Ye W."/>
            <person name="Buchan A."/>
            <person name="Gonzalez J.M."/>
            <person name="Schell M.A."/>
            <person name="Richardson P."/>
        </authorList>
    </citation>
    <scope>NUCLEOTIDE SEQUENCE [LARGE SCALE GENOMIC DNA]</scope>
    <source>
        <strain>CCS1</strain>
    </source>
</reference>
<comment type="function">
    <text evidence="1">Endonuclease that specifically degrades the RNA of RNA-DNA hybrids.</text>
</comment>
<comment type="catalytic activity">
    <reaction evidence="1">
        <text>Endonucleolytic cleavage to 5'-phosphomonoester.</text>
        <dbReference type="EC" id="3.1.26.4"/>
    </reaction>
</comment>
<comment type="cofactor">
    <cofactor evidence="1">
        <name>Mg(2+)</name>
        <dbReference type="ChEBI" id="CHEBI:18420"/>
    </cofactor>
    <text evidence="1">Binds 1 Mg(2+) ion per subunit. May bind a second metal ion at a regulatory site, or after substrate binding.</text>
</comment>
<comment type="subunit">
    <text evidence="1">Monomer.</text>
</comment>
<comment type="subcellular location">
    <subcellularLocation>
        <location evidence="1">Cytoplasm</location>
    </subcellularLocation>
</comment>
<comment type="similarity">
    <text evidence="1">Belongs to the RNase H family.</text>
</comment>
<protein>
    <recommendedName>
        <fullName evidence="1">Ribonuclease H</fullName>
        <shortName evidence="1">RNase H</shortName>
        <ecNumber evidence="1">3.1.26.4</ecNumber>
    </recommendedName>
</protein>
<evidence type="ECO:0000255" key="1">
    <source>
        <dbReference type="HAMAP-Rule" id="MF_00042"/>
    </source>
</evidence>
<evidence type="ECO:0000255" key="2">
    <source>
        <dbReference type="PROSITE-ProRule" id="PRU00408"/>
    </source>
</evidence>
<proteinExistence type="inferred from homology"/>
<name>RNH_JANSC</name>
<keyword id="KW-0963">Cytoplasm</keyword>
<keyword id="KW-0255">Endonuclease</keyword>
<keyword id="KW-0378">Hydrolase</keyword>
<keyword id="KW-0460">Magnesium</keyword>
<keyword id="KW-0479">Metal-binding</keyword>
<keyword id="KW-0540">Nuclease</keyword>
<keyword id="KW-1185">Reference proteome</keyword>
<sequence length="157" mass="17173">MPDLVAYTDGACSGNPGPGGWGALMRAKDGDTILKERELKGGEADTTNNRMELLAAISALEALDRPSTLTIITDSAYVKNGITGWMHGWKRNGWKTSTRKPVKNVDLWQRLDEAQSRHTVTWEWIKGHAGHEGNEKADELARAGMAPFKTGKRGKDG</sequence>
<dbReference type="EC" id="3.1.26.4" evidence="1"/>
<dbReference type="EMBL" id="CP000264">
    <property type="protein sequence ID" value="ABD53419.1"/>
    <property type="molecule type" value="Genomic_DNA"/>
</dbReference>
<dbReference type="RefSeq" id="WP_011453628.1">
    <property type="nucleotide sequence ID" value="NC_007802.1"/>
</dbReference>
<dbReference type="SMR" id="Q28V43"/>
<dbReference type="STRING" id="290400.Jann_0502"/>
<dbReference type="KEGG" id="jan:Jann_0502"/>
<dbReference type="eggNOG" id="COG0328">
    <property type="taxonomic scope" value="Bacteria"/>
</dbReference>
<dbReference type="HOGENOM" id="CLU_030894_6_0_5"/>
<dbReference type="OrthoDB" id="7845843at2"/>
<dbReference type="Proteomes" id="UP000008326">
    <property type="component" value="Chromosome"/>
</dbReference>
<dbReference type="GO" id="GO:0005737">
    <property type="term" value="C:cytoplasm"/>
    <property type="evidence" value="ECO:0007669"/>
    <property type="project" value="UniProtKB-SubCell"/>
</dbReference>
<dbReference type="GO" id="GO:0000287">
    <property type="term" value="F:magnesium ion binding"/>
    <property type="evidence" value="ECO:0007669"/>
    <property type="project" value="UniProtKB-UniRule"/>
</dbReference>
<dbReference type="GO" id="GO:0003676">
    <property type="term" value="F:nucleic acid binding"/>
    <property type="evidence" value="ECO:0007669"/>
    <property type="project" value="InterPro"/>
</dbReference>
<dbReference type="GO" id="GO:0004523">
    <property type="term" value="F:RNA-DNA hybrid ribonuclease activity"/>
    <property type="evidence" value="ECO:0007669"/>
    <property type="project" value="UniProtKB-UniRule"/>
</dbReference>
<dbReference type="GO" id="GO:0043137">
    <property type="term" value="P:DNA replication, removal of RNA primer"/>
    <property type="evidence" value="ECO:0007669"/>
    <property type="project" value="TreeGrafter"/>
</dbReference>
<dbReference type="CDD" id="cd09278">
    <property type="entry name" value="RNase_HI_prokaryote_like"/>
    <property type="match status" value="1"/>
</dbReference>
<dbReference type="FunFam" id="3.30.420.10:FF:000089">
    <property type="entry name" value="Ribonuclease H"/>
    <property type="match status" value="1"/>
</dbReference>
<dbReference type="Gene3D" id="3.30.420.10">
    <property type="entry name" value="Ribonuclease H-like superfamily/Ribonuclease H"/>
    <property type="match status" value="1"/>
</dbReference>
<dbReference type="HAMAP" id="MF_00042">
    <property type="entry name" value="RNase_H"/>
    <property type="match status" value="1"/>
</dbReference>
<dbReference type="InterPro" id="IPR050092">
    <property type="entry name" value="RNase_H"/>
</dbReference>
<dbReference type="InterPro" id="IPR012337">
    <property type="entry name" value="RNaseH-like_sf"/>
</dbReference>
<dbReference type="InterPro" id="IPR002156">
    <property type="entry name" value="RNaseH_domain"/>
</dbReference>
<dbReference type="InterPro" id="IPR036397">
    <property type="entry name" value="RNaseH_sf"/>
</dbReference>
<dbReference type="InterPro" id="IPR022892">
    <property type="entry name" value="RNaseHI"/>
</dbReference>
<dbReference type="NCBIfam" id="NF001236">
    <property type="entry name" value="PRK00203.1"/>
    <property type="match status" value="1"/>
</dbReference>
<dbReference type="PANTHER" id="PTHR10642">
    <property type="entry name" value="RIBONUCLEASE H1"/>
    <property type="match status" value="1"/>
</dbReference>
<dbReference type="PANTHER" id="PTHR10642:SF26">
    <property type="entry name" value="RIBONUCLEASE H1"/>
    <property type="match status" value="1"/>
</dbReference>
<dbReference type="Pfam" id="PF00075">
    <property type="entry name" value="RNase_H"/>
    <property type="match status" value="1"/>
</dbReference>
<dbReference type="SUPFAM" id="SSF53098">
    <property type="entry name" value="Ribonuclease H-like"/>
    <property type="match status" value="1"/>
</dbReference>
<dbReference type="PROSITE" id="PS50879">
    <property type="entry name" value="RNASE_H_1"/>
    <property type="match status" value="1"/>
</dbReference>
<organism>
    <name type="scientific">Jannaschia sp. (strain CCS1)</name>
    <dbReference type="NCBI Taxonomy" id="290400"/>
    <lineage>
        <taxon>Bacteria</taxon>
        <taxon>Pseudomonadati</taxon>
        <taxon>Pseudomonadota</taxon>
        <taxon>Alphaproteobacteria</taxon>
        <taxon>Rhodobacterales</taxon>
        <taxon>Roseobacteraceae</taxon>
        <taxon>Jannaschia</taxon>
    </lineage>
</organism>
<accession>Q28V43</accession>
<feature type="chain" id="PRO_0000332616" description="Ribonuclease H">
    <location>
        <begin position="1"/>
        <end position="157"/>
    </location>
</feature>
<feature type="domain" description="RNase H type-1" evidence="2">
    <location>
        <begin position="1"/>
        <end position="146"/>
    </location>
</feature>
<feature type="binding site" evidence="1">
    <location>
        <position position="9"/>
    </location>
    <ligand>
        <name>Mg(2+)</name>
        <dbReference type="ChEBI" id="CHEBI:18420"/>
        <label>1</label>
    </ligand>
</feature>
<feature type="binding site" evidence="1">
    <location>
        <position position="9"/>
    </location>
    <ligand>
        <name>Mg(2+)</name>
        <dbReference type="ChEBI" id="CHEBI:18420"/>
        <label>2</label>
    </ligand>
</feature>
<feature type="binding site" evidence="1">
    <location>
        <position position="52"/>
    </location>
    <ligand>
        <name>Mg(2+)</name>
        <dbReference type="ChEBI" id="CHEBI:18420"/>
        <label>1</label>
    </ligand>
</feature>
<feature type="binding site" evidence="1">
    <location>
        <position position="74"/>
    </location>
    <ligand>
        <name>Mg(2+)</name>
        <dbReference type="ChEBI" id="CHEBI:18420"/>
        <label>1</label>
    </ligand>
</feature>
<feature type="binding site" evidence="1">
    <location>
        <position position="138"/>
    </location>
    <ligand>
        <name>Mg(2+)</name>
        <dbReference type="ChEBI" id="CHEBI:18420"/>
        <label>2</label>
    </ligand>
</feature>
<gene>
    <name evidence="1" type="primary">rnhA</name>
    <name type="ordered locus">Jann_0502</name>
</gene>